<name>YJDF_BACSU</name>
<comment type="induction">
    <text evidence="3">Up-regulated by mannose. Is under the control of ManR. Is subject to carbon catabolite repression (CCR) by glucose. Forms part of an operon with manP and manA.</text>
</comment>
<comment type="disruption phenotype">
    <text evidence="3">Deletion of this gene has no effect on mannose utilization.</text>
</comment>
<evidence type="ECO:0000255" key="1"/>
<evidence type="ECO:0000256" key="2">
    <source>
        <dbReference type="SAM" id="MobiDB-lite"/>
    </source>
</evidence>
<evidence type="ECO:0000269" key="3">
    <source>
    </source>
</evidence>
<dbReference type="EMBL" id="AL009126">
    <property type="protein sequence ID" value="CAB13060.1"/>
    <property type="molecule type" value="Genomic_DNA"/>
</dbReference>
<dbReference type="PIR" id="A69849">
    <property type="entry name" value="A69849"/>
</dbReference>
<dbReference type="RefSeq" id="NP_389085.1">
    <property type="nucleotide sequence ID" value="NC_000964.3"/>
</dbReference>
<dbReference type="RefSeq" id="WP_010886487.1">
    <property type="nucleotide sequence ID" value="NZ_OZ025638.1"/>
</dbReference>
<dbReference type="SMR" id="O31647"/>
<dbReference type="FunCoup" id="O31647">
    <property type="interactions" value="15"/>
</dbReference>
<dbReference type="STRING" id="224308.BSU12030"/>
<dbReference type="PaxDb" id="224308-BSU12030"/>
<dbReference type="EnsemblBacteria" id="CAB13060">
    <property type="protein sequence ID" value="CAB13060"/>
    <property type="gene ID" value="BSU_12030"/>
</dbReference>
<dbReference type="GeneID" id="939820"/>
<dbReference type="KEGG" id="bsu:BSU12030"/>
<dbReference type="PATRIC" id="fig|224308.43.peg.1260"/>
<dbReference type="eggNOG" id="ENOG502ZBVG">
    <property type="taxonomic scope" value="Bacteria"/>
</dbReference>
<dbReference type="InParanoid" id="O31647"/>
<dbReference type="OrthoDB" id="4570726at2"/>
<dbReference type="PhylomeDB" id="O31647"/>
<dbReference type="BioCyc" id="BSUB:BSU12030-MONOMER"/>
<dbReference type="Proteomes" id="UP000001570">
    <property type="component" value="Chromosome"/>
</dbReference>
<dbReference type="InterPro" id="IPR016787">
    <property type="entry name" value="UCP021328"/>
</dbReference>
<dbReference type="Pfam" id="PF11208">
    <property type="entry name" value="DUF2992"/>
    <property type="match status" value="1"/>
</dbReference>
<dbReference type="PIRSF" id="PIRSF021328">
    <property type="entry name" value="UCP021328"/>
    <property type="match status" value="1"/>
</dbReference>
<accession>O31647</accession>
<keyword id="KW-0175">Coiled coil</keyword>
<keyword id="KW-1185">Reference proteome</keyword>
<gene>
    <name type="primary">yjdF</name>
    <name type="ordered locus">BSU12030</name>
</gene>
<reference key="1">
    <citation type="journal article" date="1997" name="Nature">
        <title>The complete genome sequence of the Gram-positive bacterium Bacillus subtilis.</title>
        <authorList>
            <person name="Kunst F."/>
            <person name="Ogasawara N."/>
            <person name="Moszer I."/>
            <person name="Albertini A.M."/>
            <person name="Alloni G."/>
            <person name="Azevedo V."/>
            <person name="Bertero M.G."/>
            <person name="Bessieres P."/>
            <person name="Bolotin A."/>
            <person name="Borchert S."/>
            <person name="Borriss R."/>
            <person name="Boursier L."/>
            <person name="Brans A."/>
            <person name="Braun M."/>
            <person name="Brignell S.C."/>
            <person name="Bron S."/>
            <person name="Brouillet S."/>
            <person name="Bruschi C.V."/>
            <person name="Caldwell B."/>
            <person name="Capuano V."/>
            <person name="Carter N.M."/>
            <person name="Choi S.-K."/>
            <person name="Codani J.-J."/>
            <person name="Connerton I.F."/>
            <person name="Cummings N.J."/>
            <person name="Daniel R.A."/>
            <person name="Denizot F."/>
            <person name="Devine K.M."/>
            <person name="Duesterhoeft A."/>
            <person name="Ehrlich S.D."/>
            <person name="Emmerson P.T."/>
            <person name="Entian K.-D."/>
            <person name="Errington J."/>
            <person name="Fabret C."/>
            <person name="Ferrari E."/>
            <person name="Foulger D."/>
            <person name="Fritz C."/>
            <person name="Fujita M."/>
            <person name="Fujita Y."/>
            <person name="Fuma S."/>
            <person name="Galizzi A."/>
            <person name="Galleron N."/>
            <person name="Ghim S.-Y."/>
            <person name="Glaser P."/>
            <person name="Goffeau A."/>
            <person name="Golightly E.J."/>
            <person name="Grandi G."/>
            <person name="Guiseppi G."/>
            <person name="Guy B.J."/>
            <person name="Haga K."/>
            <person name="Haiech J."/>
            <person name="Harwood C.R."/>
            <person name="Henaut A."/>
            <person name="Hilbert H."/>
            <person name="Holsappel S."/>
            <person name="Hosono S."/>
            <person name="Hullo M.-F."/>
            <person name="Itaya M."/>
            <person name="Jones L.-M."/>
            <person name="Joris B."/>
            <person name="Karamata D."/>
            <person name="Kasahara Y."/>
            <person name="Klaerr-Blanchard M."/>
            <person name="Klein C."/>
            <person name="Kobayashi Y."/>
            <person name="Koetter P."/>
            <person name="Koningstein G."/>
            <person name="Krogh S."/>
            <person name="Kumano M."/>
            <person name="Kurita K."/>
            <person name="Lapidus A."/>
            <person name="Lardinois S."/>
            <person name="Lauber J."/>
            <person name="Lazarevic V."/>
            <person name="Lee S.-M."/>
            <person name="Levine A."/>
            <person name="Liu H."/>
            <person name="Masuda S."/>
            <person name="Mauel C."/>
            <person name="Medigue C."/>
            <person name="Medina N."/>
            <person name="Mellado R.P."/>
            <person name="Mizuno M."/>
            <person name="Moestl D."/>
            <person name="Nakai S."/>
            <person name="Noback M."/>
            <person name="Noone D."/>
            <person name="O'Reilly M."/>
            <person name="Ogawa K."/>
            <person name="Ogiwara A."/>
            <person name="Oudega B."/>
            <person name="Park S.-H."/>
            <person name="Parro V."/>
            <person name="Pohl T.M."/>
            <person name="Portetelle D."/>
            <person name="Porwollik S."/>
            <person name="Prescott A.M."/>
            <person name="Presecan E."/>
            <person name="Pujic P."/>
            <person name="Purnelle B."/>
            <person name="Rapoport G."/>
            <person name="Rey M."/>
            <person name="Reynolds S."/>
            <person name="Rieger M."/>
            <person name="Rivolta C."/>
            <person name="Rocha E."/>
            <person name="Roche B."/>
            <person name="Rose M."/>
            <person name="Sadaie Y."/>
            <person name="Sato T."/>
            <person name="Scanlan E."/>
            <person name="Schleich S."/>
            <person name="Schroeter R."/>
            <person name="Scoffone F."/>
            <person name="Sekiguchi J."/>
            <person name="Sekowska A."/>
            <person name="Seror S.J."/>
            <person name="Serror P."/>
            <person name="Shin B.-S."/>
            <person name="Soldo B."/>
            <person name="Sorokin A."/>
            <person name="Tacconi E."/>
            <person name="Takagi T."/>
            <person name="Takahashi H."/>
            <person name="Takemaru K."/>
            <person name="Takeuchi M."/>
            <person name="Tamakoshi A."/>
            <person name="Tanaka T."/>
            <person name="Terpstra P."/>
            <person name="Tognoni A."/>
            <person name="Tosato V."/>
            <person name="Uchiyama S."/>
            <person name="Vandenbol M."/>
            <person name="Vannier F."/>
            <person name="Vassarotti A."/>
            <person name="Viari A."/>
            <person name="Wambutt R."/>
            <person name="Wedler E."/>
            <person name="Wedler H."/>
            <person name="Weitzenegger T."/>
            <person name="Winters P."/>
            <person name="Wipat A."/>
            <person name="Yamamoto H."/>
            <person name="Yamane K."/>
            <person name="Yasumoto K."/>
            <person name="Yata K."/>
            <person name="Yoshida K."/>
            <person name="Yoshikawa H.-F."/>
            <person name="Zumstein E."/>
            <person name="Yoshikawa H."/>
            <person name="Danchin A."/>
        </authorList>
    </citation>
    <scope>NUCLEOTIDE SEQUENCE [LARGE SCALE GENOMIC DNA]</scope>
    <source>
        <strain>168</strain>
    </source>
</reference>
<reference key="2">
    <citation type="journal article" date="2010" name="J. Bacteriol.">
        <title>Characterization of a mannose utilization system in Bacillus subtilis.</title>
        <authorList>
            <person name="Sun T."/>
            <person name="Altenbuchner J."/>
        </authorList>
    </citation>
    <scope>INDUCTION</scope>
    <scope>DISRUPTION PHENOTYPE</scope>
</reference>
<proteinExistence type="evidence at transcript level"/>
<protein>
    <recommendedName>
        <fullName>Uncharacterized protein YjdF</fullName>
    </recommendedName>
</protein>
<sequence>MSVTFPSSGCPSFFNIFYEEGIVMKLTIYYDGQFWVGVVEVVDNGKLRAFRHLFGKEPRDSEVLEFVHNQLLNMMAQAEQEGVRLQGRRQKKINPKRLQRQVSKELKNAGVTSKAQEAIKLELEARKQKKKQIMKEQREHVKEQRYMLKKQKAKKKHRGK</sequence>
<feature type="chain" id="PRO_0000360047" description="Uncharacterized protein YjdF">
    <location>
        <begin position="1"/>
        <end position="160"/>
    </location>
</feature>
<feature type="region of interest" description="Disordered" evidence="2">
    <location>
        <begin position="82"/>
        <end position="109"/>
    </location>
</feature>
<feature type="region of interest" description="Disordered" evidence="2">
    <location>
        <begin position="129"/>
        <end position="160"/>
    </location>
</feature>
<feature type="coiled-coil region" evidence="1">
    <location>
        <begin position="69"/>
        <end position="145"/>
    </location>
</feature>
<feature type="compositionally biased region" description="Basic residues" evidence="2">
    <location>
        <begin position="86"/>
        <end position="99"/>
    </location>
</feature>
<feature type="compositionally biased region" description="Basic and acidic residues" evidence="2">
    <location>
        <begin position="133"/>
        <end position="146"/>
    </location>
</feature>
<feature type="compositionally biased region" description="Basic residues" evidence="2">
    <location>
        <begin position="147"/>
        <end position="160"/>
    </location>
</feature>
<organism>
    <name type="scientific">Bacillus subtilis (strain 168)</name>
    <dbReference type="NCBI Taxonomy" id="224308"/>
    <lineage>
        <taxon>Bacteria</taxon>
        <taxon>Bacillati</taxon>
        <taxon>Bacillota</taxon>
        <taxon>Bacilli</taxon>
        <taxon>Bacillales</taxon>
        <taxon>Bacillaceae</taxon>
        <taxon>Bacillus</taxon>
    </lineage>
</organism>